<reference key="1">
    <citation type="journal article" date="2010" name="PLoS ONE">
        <title>Genome sequence of Cronobacter sakazakii BAA-894 and comparative genomic hybridization analysis with other Cronobacter species.</title>
        <authorList>
            <person name="Kucerova E."/>
            <person name="Clifton S.W."/>
            <person name="Xia X.Q."/>
            <person name="Long F."/>
            <person name="Porwollik S."/>
            <person name="Fulton L."/>
            <person name="Fronick C."/>
            <person name="Minx P."/>
            <person name="Kyung K."/>
            <person name="Warren W."/>
            <person name="Fulton R."/>
            <person name="Feng D."/>
            <person name="Wollam A."/>
            <person name="Shah N."/>
            <person name="Bhonagiri V."/>
            <person name="Nash W.E."/>
            <person name="Hallsworth-Pepin K."/>
            <person name="Wilson R.K."/>
            <person name="McClelland M."/>
            <person name="Forsythe S.J."/>
        </authorList>
    </citation>
    <scope>NUCLEOTIDE SEQUENCE [LARGE SCALE GENOMIC DNA]</scope>
    <source>
        <strain>ATCC BAA-894</strain>
    </source>
</reference>
<name>RS10_CROS8</name>
<evidence type="ECO:0000255" key="1">
    <source>
        <dbReference type="HAMAP-Rule" id="MF_00508"/>
    </source>
</evidence>
<evidence type="ECO:0000305" key="2"/>
<comment type="function">
    <text evidence="1">Involved in the binding of tRNA to the ribosomes.</text>
</comment>
<comment type="subunit">
    <text evidence="1">Part of the 30S ribosomal subunit.</text>
</comment>
<comment type="similarity">
    <text evidence="1">Belongs to the universal ribosomal protein uS10 family.</text>
</comment>
<dbReference type="EMBL" id="CP000783">
    <property type="protein sequence ID" value="ABU75310.1"/>
    <property type="molecule type" value="Genomic_DNA"/>
</dbReference>
<dbReference type="RefSeq" id="WP_001181005.1">
    <property type="nucleotide sequence ID" value="NC_009778.1"/>
</dbReference>
<dbReference type="SMR" id="A7MPI6"/>
<dbReference type="GeneID" id="98390443"/>
<dbReference type="KEGG" id="esa:ESA_00001"/>
<dbReference type="HOGENOM" id="CLU_122625_1_3_6"/>
<dbReference type="Proteomes" id="UP000000260">
    <property type="component" value="Chromosome"/>
</dbReference>
<dbReference type="GO" id="GO:1990904">
    <property type="term" value="C:ribonucleoprotein complex"/>
    <property type="evidence" value="ECO:0007669"/>
    <property type="project" value="UniProtKB-KW"/>
</dbReference>
<dbReference type="GO" id="GO:0005840">
    <property type="term" value="C:ribosome"/>
    <property type="evidence" value="ECO:0007669"/>
    <property type="project" value="UniProtKB-KW"/>
</dbReference>
<dbReference type="GO" id="GO:0003735">
    <property type="term" value="F:structural constituent of ribosome"/>
    <property type="evidence" value="ECO:0007669"/>
    <property type="project" value="InterPro"/>
</dbReference>
<dbReference type="GO" id="GO:0000049">
    <property type="term" value="F:tRNA binding"/>
    <property type="evidence" value="ECO:0007669"/>
    <property type="project" value="UniProtKB-UniRule"/>
</dbReference>
<dbReference type="GO" id="GO:0006412">
    <property type="term" value="P:translation"/>
    <property type="evidence" value="ECO:0007669"/>
    <property type="project" value="UniProtKB-UniRule"/>
</dbReference>
<dbReference type="FunFam" id="3.30.70.600:FF:000001">
    <property type="entry name" value="30S ribosomal protein S10"/>
    <property type="match status" value="1"/>
</dbReference>
<dbReference type="Gene3D" id="3.30.70.600">
    <property type="entry name" value="Ribosomal protein S10 domain"/>
    <property type="match status" value="1"/>
</dbReference>
<dbReference type="HAMAP" id="MF_00508">
    <property type="entry name" value="Ribosomal_uS10"/>
    <property type="match status" value="1"/>
</dbReference>
<dbReference type="InterPro" id="IPR001848">
    <property type="entry name" value="Ribosomal_uS10"/>
</dbReference>
<dbReference type="InterPro" id="IPR018268">
    <property type="entry name" value="Ribosomal_uS10_CS"/>
</dbReference>
<dbReference type="InterPro" id="IPR027486">
    <property type="entry name" value="Ribosomal_uS10_dom"/>
</dbReference>
<dbReference type="InterPro" id="IPR036838">
    <property type="entry name" value="Ribosomal_uS10_dom_sf"/>
</dbReference>
<dbReference type="NCBIfam" id="NF001861">
    <property type="entry name" value="PRK00596.1"/>
    <property type="match status" value="1"/>
</dbReference>
<dbReference type="NCBIfam" id="TIGR01049">
    <property type="entry name" value="rpsJ_bact"/>
    <property type="match status" value="1"/>
</dbReference>
<dbReference type="PANTHER" id="PTHR11700">
    <property type="entry name" value="30S RIBOSOMAL PROTEIN S10 FAMILY MEMBER"/>
    <property type="match status" value="1"/>
</dbReference>
<dbReference type="Pfam" id="PF00338">
    <property type="entry name" value="Ribosomal_S10"/>
    <property type="match status" value="1"/>
</dbReference>
<dbReference type="PRINTS" id="PR00971">
    <property type="entry name" value="RIBOSOMALS10"/>
</dbReference>
<dbReference type="SMART" id="SM01403">
    <property type="entry name" value="Ribosomal_S10"/>
    <property type="match status" value="1"/>
</dbReference>
<dbReference type="SUPFAM" id="SSF54999">
    <property type="entry name" value="Ribosomal protein S10"/>
    <property type="match status" value="1"/>
</dbReference>
<dbReference type="PROSITE" id="PS00361">
    <property type="entry name" value="RIBOSOMAL_S10"/>
    <property type="match status" value="1"/>
</dbReference>
<proteinExistence type="inferred from homology"/>
<accession>A7MPI6</accession>
<keyword id="KW-1185">Reference proteome</keyword>
<keyword id="KW-0687">Ribonucleoprotein</keyword>
<keyword id="KW-0689">Ribosomal protein</keyword>
<gene>
    <name evidence="1" type="primary">rpsJ</name>
    <name type="ordered locus">ESA_00001</name>
</gene>
<protein>
    <recommendedName>
        <fullName evidence="1">Small ribosomal subunit protein uS10</fullName>
    </recommendedName>
    <alternativeName>
        <fullName evidence="2">30S ribosomal protein S10</fullName>
    </alternativeName>
</protein>
<organism>
    <name type="scientific">Cronobacter sakazakii (strain ATCC BAA-894)</name>
    <name type="common">Enterobacter sakazakii</name>
    <dbReference type="NCBI Taxonomy" id="290339"/>
    <lineage>
        <taxon>Bacteria</taxon>
        <taxon>Pseudomonadati</taxon>
        <taxon>Pseudomonadota</taxon>
        <taxon>Gammaproteobacteria</taxon>
        <taxon>Enterobacterales</taxon>
        <taxon>Enterobacteriaceae</taxon>
        <taxon>Cronobacter</taxon>
    </lineage>
</organism>
<feature type="chain" id="PRO_1000015019" description="Small ribosomal subunit protein uS10">
    <location>
        <begin position="1"/>
        <end position="103"/>
    </location>
</feature>
<sequence length="103" mass="11767">MQNQRIRIRLKAFDHRLIDQSTAEIVETAKRTGAQVRGPIPLPTRKERFTVLISPHVNKDARDQYEIRTHKRLVDIVEPTEKTVDALMRLDLAAGVDVQISLG</sequence>